<name>MURG_SHEB5</name>
<feature type="chain" id="PRO_1000002686" description="UDP-N-acetylglucosamine--N-acetylmuramyl-(pentapeptide) pyrophosphoryl-undecaprenol N-acetylglucosamine transferase">
    <location>
        <begin position="1"/>
        <end position="362"/>
    </location>
</feature>
<feature type="binding site" evidence="1">
    <location>
        <begin position="15"/>
        <end position="17"/>
    </location>
    <ligand>
        <name>UDP-N-acetyl-alpha-D-glucosamine</name>
        <dbReference type="ChEBI" id="CHEBI:57705"/>
    </ligand>
</feature>
<feature type="binding site" evidence="1">
    <location>
        <position position="127"/>
    </location>
    <ligand>
        <name>UDP-N-acetyl-alpha-D-glucosamine</name>
        <dbReference type="ChEBI" id="CHEBI:57705"/>
    </ligand>
</feature>
<feature type="binding site" evidence="1">
    <location>
        <position position="165"/>
    </location>
    <ligand>
        <name>UDP-N-acetyl-alpha-D-glucosamine</name>
        <dbReference type="ChEBI" id="CHEBI:57705"/>
    </ligand>
</feature>
<feature type="binding site" evidence="1">
    <location>
        <position position="191"/>
    </location>
    <ligand>
        <name>UDP-N-acetyl-alpha-D-glucosamine</name>
        <dbReference type="ChEBI" id="CHEBI:57705"/>
    </ligand>
</feature>
<feature type="binding site" evidence="1">
    <location>
        <position position="247"/>
    </location>
    <ligand>
        <name>UDP-N-acetyl-alpha-D-glucosamine</name>
        <dbReference type="ChEBI" id="CHEBI:57705"/>
    </ligand>
</feature>
<feature type="binding site" evidence="1">
    <location>
        <begin position="266"/>
        <end position="271"/>
    </location>
    <ligand>
        <name>UDP-N-acetyl-alpha-D-glucosamine</name>
        <dbReference type="ChEBI" id="CHEBI:57705"/>
    </ligand>
</feature>
<feature type="binding site" evidence="1">
    <location>
        <position position="292"/>
    </location>
    <ligand>
        <name>UDP-N-acetyl-alpha-D-glucosamine</name>
        <dbReference type="ChEBI" id="CHEBI:57705"/>
    </ligand>
</feature>
<gene>
    <name evidence="1" type="primary">murG</name>
    <name type="ordered locus">Sbal_0402</name>
</gene>
<accession>A3CZM1</accession>
<dbReference type="EC" id="2.4.1.227" evidence="1"/>
<dbReference type="EMBL" id="CP000563">
    <property type="protein sequence ID" value="ABN59934.1"/>
    <property type="molecule type" value="Genomic_DNA"/>
</dbReference>
<dbReference type="RefSeq" id="WP_011845618.1">
    <property type="nucleotide sequence ID" value="NC_009052.1"/>
</dbReference>
<dbReference type="SMR" id="A3CZM1"/>
<dbReference type="STRING" id="325240.Sbal_0402"/>
<dbReference type="CAZy" id="GT28">
    <property type="family name" value="Glycosyltransferase Family 28"/>
</dbReference>
<dbReference type="KEGG" id="sbl:Sbal_0402"/>
<dbReference type="HOGENOM" id="CLU_037404_2_0_6"/>
<dbReference type="OrthoDB" id="9808936at2"/>
<dbReference type="UniPathway" id="UPA00219"/>
<dbReference type="Proteomes" id="UP000001557">
    <property type="component" value="Chromosome"/>
</dbReference>
<dbReference type="GO" id="GO:0005886">
    <property type="term" value="C:plasma membrane"/>
    <property type="evidence" value="ECO:0007669"/>
    <property type="project" value="UniProtKB-SubCell"/>
</dbReference>
<dbReference type="GO" id="GO:0051991">
    <property type="term" value="F:UDP-N-acetyl-D-glucosamine:N-acetylmuramoyl-L-alanyl-D-glutamyl-meso-2,6-diaminopimelyl-D-alanyl-D-alanine-diphosphoundecaprenol 4-beta-N-acetylglucosaminlytransferase activity"/>
    <property type="evidence" value="ECO:0007669"/>
    <property type="project" value="RHEA"/>
</dbReference>
<dbReference type="GO" id="GO:0050511">
    <property type="term" value="F:undecaprenyldiphospho-muramoylpentapeptide beta-N-acetylglucosaminyltransferase activity"/>
    <property type="evidence" value="ECO:0007669"/>
    <property type="project" value="UniProtKB-UniRule"/>
</dbReference>
<dbReference type="GO" id="GO:0005975">
    <property type="term" value="P:carbohydrate metabolic process"/>
    <property type="evidence" value="ECO:0007669"/>
    <property type="project" value="InterPro"/>
</dbReference>
<dbReference type="GO" id="GO:0051301">
    <property type="term" value="P:cell division"/>
    <property type="evidence" value="ECO:0007669"/>
    <property type="project" value="UniProtKB-KW"/>
</dbReference>
<dbReference type="GO" id="GO:0071555">
    <property type="term" value="P:cell wall organization"/>
    <property type="evidence" value="ECO:0007669"/>
    <property type="project" value="UniProtKB-KW"/>
</dbReference>
<dbReference type="GO" id="GO:0030259">
    <property type="term" value="P:lipid glycosylation"/>
    <property type="evidence" value="ECO:0007669"/>
    <property type="project" value="UniProtKB-UniRule"/>
</dbReference>
<dbReference type="GO" id="GO:0009252">
    <property type="term" value="P:peptidoglycan biosynthetic process"/>
    <property type="evidence" value="ECO:0007669"/>
    <property type="project" value="UniProtKB-UniRule"/>
</dbReference>
<dbReference type="GO" id="GO:0008360">
    <property type="term" value="P:regulation of cell shape"/>
    <property type="evidence" value="ECO:0007669"/>
    <property type="project" value="UniProtKB-KW"/>
</dbReference>
<dbReference type="CDD" id="cd03785">
    <property type="entry name" value="GT28_MurG"/>
    <property type="match status" value="1"/>
</dbReference>
<dbReference type="Gene3D" id="3.40.50.2000">
    <property type="entry name" value="Glycogen Phosphorylase B"/>
    <property type="match status" value="2"/>
</dbReference>
<dbReference type="HAMAP" id="MF_00033">
    <property type="entry name" value="MurG"/>
    <property type="match status" value="1"/>
</dbReference>
<dbReference type="InterPro" id="IPR006009">
    <property type="entry name" value="GlcNAc_MurG"/>
</dbReference>
<dbReference type="InterPro" id="IPR007235">
    <property type="entry name" value="Glyco_trans_28_C"/>
</dbReference>
<dbReference type="InterPro" id="IPR004276">
    <property type="entry name" value="GlycoTrans_28_N"/>
</dbReference>
<dbReference type="NCBIfam" id="TIGR01133">
    <property type="entry name" value="murG"/>
    <property type="match status" value="1"/>
</dbReference>
<dbReference type="PANTHER" id="PTHR21015:SF22">
    <property type="entry name" value="GLYCOSYLTRANSFERASE"/>
    <property type="match status" value="1"/>
</dbReference>
<dbReference type="PANTHER" id="PTHR21015">
    <property type="entry name" value="UDP-N-ACETYLGLUCOSAMINE--N-ACETYLMURAMYL-(PENTAPEPTIDE) PYROPHOSPHORYL-UNDECAPRENOL N-ACETYLGLUCOSAMINE TRANSFERASE 1"/>
    <property type="match status" value="1"/>
</dbReference>
<dbReference type="Pfam" id="PF04101">
    <property type="entry name" value="Glyco_tran_28_C"/>
    <property type="match status" value="1"/>
</dbReference>
<dbReference type="Pfam" id="PF03033">
    <property type="entry name" value="Glyco_transf_28"/>
    <property type="match status" value="1"/>
</dbReference>
<dbReference type="SUPFAM" id="SSF53756">
    <property type="entry name" value="UDP-Glycosyltransferase/glycogen phosphorylase"/>
    <property type="match status" value="1"/>
</dbReference>
<reference key="1">
    <citation type="submission" date="2007-02" db="EMBL/GenBank/DDBJ databases">
        <title>Complete sequence of chromosome of Shewanella baltica OS155.</title>
        <authorList>
            <consortium name="US DOE Joint Genome Institute"/>
            <person name="Copeland A."/>
            <person name="Lucas S."/>
            <person name="Lapidus A."/>
            <person name="Barry K."/>
            <person name="Detter J.C."/>
            <person name="Glavina del Rio T."/>
            <person name="Hammon N."/>
            <person name="Israni S."/>
            <person name="Dalin E."/>
            <person name="Tice H."/>
            <person name="Pitluck S."/>
            <person name="Sims D.R."/>
            <person name="Brettin T."/>
            <person name="Bruce D."/>
            <person name="Han C."/>
            <person name="Tapia R."/>
            <person name="Brainard J."/>
            <person name="Schmutz J."/>
            <person name="Larimer F."/>
            <person name="Land M."/>
            <person name="Hauser L."/>
            <person name="Kyrpides N."/>
            <person name="Mikhailova N."/>
            <person name="Brettar I."/>
            <person name="Klappenbach J."/>
            <person name="Konstantinidis K."/>
            <person name="Rodrigues J."/>
            <person name="Tiedje J."/>
            <person name="Richardson P."/>
        </authorList>
    </citation>
    <scope>NUCLEOTIDE SEQUENCE [LARGE SCALE GENOMIC DNA]</scope>
    <source>
        <strain>OS155 / ATCC BAA-1091</strain>
    </source>
</reference>
<protein>
    <recommendedName>
        <fullName evidence="1">UDP-N-acetylglucosamine--N-acetylmuramyl-(pentapeptide) pyrophosphoryl-undecaprenol N-acetylglucosamine transferase</fullName>
        <ecNumber evidence="1">2.4.1.227</ecNumber>
    </recommendedName>
    <alternativeName>
        <fullName evidence="1">Undecaprenyl-PP-MurNAc-pentapeptide-UDPGlcNAc GlcNAc transferase</fullName>
    </alternativeName>
</protein>
<sequence>MTPAGKRILVMAGGTGGHVFPALAVAKYLAQQGWQVRWLGTADRMEARLVPQYGFDIDFIDIKGVRGNGLIRKLAAPFKVVRSILQAKAVIAEFKPDVVLGMGGFASGPGGVAARLAGIPLVLHEQNAIPGMTNKLLSRIATQVLCAFKNTFTTVKAKVVGNPIRQELIALGAEPKPEADEALKVLVVGGSLGAKVFNDLMPEAVAILSQQQFVTVWHQVGKDNLTGVKAAYQQHGQDGGVNIAEFIDDMEAAYRWADVVLCRAGALTVSELAAVGLPSILVPYPHAVDDHQTRNGQVLVEAGAAFLLPQAILDVNKLAGKLQLLANDRTELARMGQRARDVAVLDATEQVAAVCISLAEKG</sequence>
<organism>
    <name type="scientific">Shewanella baltica (strain OS155 / ATCC BAA-1091)</name>
    <dbReference type="NCBI Taxonomy" id="325240"/>
    <lineage>
        <taxon>Bacteria</taxon>
        <taxon>Pseudomonadati</taxon>
        <taxon>Pseudomonadota</taxon>
        <taxon>Gammaproteobacteria</taxon>
        <taxon>Alteromonadales</taxon>
        <taxon>Shewanellaceae</taxon>
        <taxon>Shewanella</taxon>
    </lineage>
</organism>
<comment type="function">
    <text evidence="1">Cell wall formation. Catalyzes the transfer of a GlcNAc subunit on undecaprenyl-pyrophosphoryl-MurNAc-pentapeptide (lipid intermediate I) to form undecaprenyl-pyrophosphoryl-MurNAc-(pentapeptide)GlcNAc (lipid intermediate II).</text>
</comment>
<comment type="catalytic activity">
    <reaction evidence="1">
        <text>di-trans,octa-cis-undecaprenyl diphospho-N-acetyl-alpha-D-muramoyl-L-alanyl-D-glutamyl-meso-2,6-diaminopimeloyl-D-alanyl-D-alanine + UDP-N-acetyl-alpha-D-glucosamine = di-trans,octa-cis-undecaprenyl diphospho-[N-acetyl-alpha-D-glucosaminyl-(1-&gt;4)]-N-acetyl-alpha-D-muramoyl-L-alanyl-D-glutamyl-meso-2,6-diaminopimeloyl-D-alanyl-D-alanine + UDP + H(+)</text>
        <dbReference type="Rhea" id="RHEA:31227"/>
        <dbReference type="ChEBI" id="CHEBI:15378"/>
        <dbReference type="ChEBI" id="CHEBI:57705"/>
        <dbReference type="ChEBI" id="CHEBI:58223"/>
        <dbReference type="ChEBI" id="CHEBI:61387"/>
        <dbReference type="ChEBI" id="CHEBI:61388"/>
        <dbReference type="EC" id="2.4.1.227"/>
    </reaction>
</comment>
<comment type="pathway">
    <text evidence="1">Cell wall biogenesis; peptidoglycan biosynthesis.</text>
</comment>
<comment type="subcellular location">
    <subcellularLocation>
        <location evidence="1">Cell inner membrane</location>
        <topology evidence="1">Peripheral membrane protein</topology>
        <orientation evidence="1">Cytoplasmic side</orientation>
    </subcellularLocation>
</comment>
<comment type="similarity">
    <text evidence="1">Belongs to the glycosyltransferase 28 family. MurG subfamily.</text>
</comment>
<proteinExistence type="inferred from homology"/>
<keyword id="KW-0131">Cell cycle</keyword>
<keyword id="KW-0132">Cell division</keyword>
<keyword id="KW-0997">Cell inner membrane</keyword>
<keyword id="KW-1003">Cell membrane</keyword>
<keyword id="KW-0133">Cell shape</keyword>
<keyword id="KW-0961">Cell wall biogenesis/degradation</keyword>
<keyword id="KW-0328">Glycosyltransferase</keyword>
<keyword id="KW-0472">Membrane</keyword>
<keyword id="KW-0573">Peptidoglycan synthesis</keyword>
<keyword id="KW-1185">Reference proteome</keyword>
<keyword id="KW-0808">Transferase</keyword>
<evidence type="ECO:0000255" key="1">
    <source>
        <dbReference type="HAMAP-Rule" id="MF_00033"/>
    </source>
</evidence>